<organism>
    <name type="scientific">Phytophthora cinnamomi</name>
    <name type="common">Cinnamon fungus</name>
    <dbReference type="NCBI Taxonomy" id="4785"/>
    <lineage>
        <taxon>Eukaryota</taxon>
        <taxon>Sar</taxon>
        <taxon>Stramenopiles</taxon>
        <taxon>Oomycota</taxon>
        <taxon>Peronosporales</taxon>
        <taxon>Peronosporaceae</taxon>
        <taxon>Phytophthora</taxon>
    </lineage>
</organism>
<dbReference type="EMBL" id="U22050">
    <property type="protein sequence ID" value="AAC05441.1"/>
    <property type="molecule type" value="Genomic_DNA"/>
</dbReference>
<dbReference type="SMR" id="O59837"/>
<dbReference type="VEuPathDB" id="FungiDB:IUM83_12719"/>
<dbReference type="GO" id="GO:0005737">
    <property type="term" value="C:cytoplasm"/>
    <property type="evidence" value="ECO:0007669"/>
    <property type="project" value="UniProtKB-KW"/>
</dbReference>
<dbReference type="GO" id="GO:0005874">
    <property type="term" value="C:microtubule"/>
    <property type="evidence" value="ECO:0007669"/>
    <property type="project" value="UniProtKB-KW"/>
</dbReference>
<dbReference type="GO" id="GO:0005525">
    <property type="term" value="F:GTP binding"/>
    <property type="evidence" value="ECO:0007669"/>
    <property type="project" value="UniProtKB-KW"/>
</dbReference>
<dbReference type="GO" id="GO:0003924">
    <property type="term" value="F:GTPase activity"/>
    <property type="evidence" value="ECO:0007669"/>
    <property type="project" value="InterPro"/>
</dbReference>
<dbReference type="GO" id="GO:0046872">
    <property type="term" value="F:metal ion binding"/>
    <property type="evidence" value="ECO:0007669"/>
    <property type="project" value="UniProtKB-KW"/>
</dbReference>
<dbReference type="GO" id="GO:0005200">
    <property type="term" value="F:structural constituent of cytoskeleton"/>
    <property type="evidence" value="ECO:0007669"/>
    <property type="project" value="InterPro"/>
</dbReference>
<dbReference type="GO" id="GO:0007017">
    <property type="term" value="P:microtubule-based process"/>
    <property type="evidence" value="ECO:0007669"/>
    <property type="project" value="InterPro"/>
</dbReference>
<dbReference type="CDD" id="cd02187">
    <property type="entry name" value="beta_tubulin"/>
    <property type="match status" value="1"/>
</dbReference>
<dbReference type="FunFam" id="1.10.287.600:FF:000002">
    <property type="entry name" value="Tubulin beta chain"/>
    <property type="match status" value="1"/>
</dbReference>
<dbReference type="FunFam" id="3.30.1330.20:FF:000002">
    <property type="entry name" value="Tubulin beta chain"/>
    <property type="match status" value="1"/>
</dbReference>
<dbReference type="FunFam" id="3.40.50.1440:FF:000003">
    <property type="entry name" value="Tubulin beta chain"/>
    <property type="match status" value="1"/>
</dbReference>
<dbReference type="Gene3D" id="1.10.287.600">
    <property type="entry name" value="Helix hairpin bin"/>
    <property type="match status" value="1"/>
</dbReference>
<dbReference type="Gene3D" id="3.30.1330.20">
    <property type="entry name" value="Tubulin/FtsZ, C-terminal domain"/>
    <property type="match status" value="1"/>
</dbReference>
<dbReference type="Gene3D" id="3.40.50.1440">
    <property type="entry name" value="Tubulin/FtsZ, GTPase domain"/>
    <property type="match status" value="1"/>
</dbReference>
<dbReference type="InterPro" id="IPR013838">
    <property type="entry name" value="Beta-tubulin_BS"/>
</dbReference>
<dbReference type="InterPro" id="IPR002453">
    <property type="entry name" value="Beta_tubulin"/>
</dbReference>
<dbReference type="InterPro" id="IPR008280">
    <property type="entry name" value="Tub_FtsZ_C"/>
</dbReference>
<dbReference type="InterPro" id="IPR000217">
    <property type="entry name" value="Tubulin"/>
</dbReference>
<dbReference type="InterPro" id="IPR037103">
    <property type="entry name" value="Tubulin/FtsZ-like_C"/>
</dbReference>
<dbReference type="InterPro" id="IPR018316">
    <property type="entry name" value="Tubulin/FtsZ_2-layer-sand-dom"/>
</dbReference>
<dbReference type="InterPro" id="IPR036525">
    <property type="entry name" value="Tubulin/FtsZ_GTPase_sf"/>
</dbReference>
<dbReference type="InterPro" id="IPR023123">
    <property type="entry name" value="Tubulin_C"/>
</dbReference>
<dbReference type="InterPro" id="IPR017975">
    <property type="entry name" value="Tubulin_CS"/>
</dbReference>
<dbReference type="InterPro" id="IPR003008">
    <property type="entry name" value="Tubulin_FtsZ_GTPase"/>
</dbReference>
<dbReference type="PANTHER" id="PTHR11588">
    <property type="entry name" value="TUBULIN"/>
    <property type="match status" value="1"/>
</dbReference>
<dbReference type="Pfam" id="PF00091">
    <property type="entry name" value="Tubulin"/>
    <property type="match status" value="1"/>
</dbReference>
<dbReference type="Pfam" id="PF03953">
    <property type="entry name" value="Tubulin_C"/>
    <property type="match status" value="1"/>
</dbReference>
<dbReference type="PRINTS" id="PR01163">
    <property type="entry name" value="BETATUBULIN"/>
</dbReference>
<dbReference type="PRINTS" id="PR01161">
    <property type="entry name" value="TUBULIN"/>
</dbReference>
<dbReference type="SMART" id="SM00864">
    <property type="entry name" value="Tubulin"/>
    <property type="match status" value="1"/>
</dbReference>
<dbReference type="SMART" id="SM00865">
    <property type="entry name" value="Tubulin_C"/>
    <property type="match status" value="1"/>
</dbReference>
<dbReference type="SUPFAM" id="SSF55307">
    <property type="entry name" value="Tubulin C-terminal domain-like"/>
    <property type="match status" value="1"/>
</dbReference>
<dbReference type="SUPFAM" id="SSF52490">
    <property type="entry name" value="Tubulin nucleotide-binding domain-like"/>
    <property type="match status" value="1"/>
</dbReference>
<dbReference type="PROSITE" id="PS00227">
    <property type="entry name" value="TUBULIN"/>
    <property type="match status" value="1"/>
</dbReference>
<dbReference type="PROSITE" id="PS00228">
    <property type="entry name" value="TUBULIN_B_AUTOREG"/>
    <property type="match status" value="1"/>
</dbReference>
<proteinExistence type="inferred from homology"/>
<reference key="1">
    <citation type="journal article" date="1998" name="Mycologia">
        <title>Isolation and characterization of the single beta-tubulin gene in Phytophthora cinnamomi.</title>
        <authorList>
            <person name="Weerakoon N.D."/>
            <person name="Roberts J.K."/>
            <person name="Lehnen L.P. Jr."/>
            <person name="Wilkinson J.M."/>
            <person name="Marshall J.S."/>
            <person name="Hardham A.R."/>
        </authorList>
        <dbReference type="AGRICOLA" id="IND20633136"/>
    </citation>
    <scope>NUCLEOTIDE SEQUENCE [GENOMIC DNA]</scope>
    <source>
        <strain>ATCC 200982 / H1000 / 6Br / DAR 52646</strain>
    </source>
</reference>
<feature type="chain" id="PRO_0000048308" description="Tubulin beta chain">
    <location>
        <begin position="1"/>
        <end position="444"/>
    </location>
</feature>
<feature type="binding site" evidence="2">
    <location>
        <position position="11"/>
    </location>
    <ligand>
        <name>GTP</name>
        <dbReference type="ChEBI" id="CHEBI:37565"/>
    </ligand>
</feature>
<feature type="binding site" evidence="1">
    <location>
        <position position="69"/>
    </location>
    <ligand>
        <name>GTP</name>
        <dbReference type="ChEBI" id="CHEBI:37565"/>
    </ligand>
</feature>
<feature type="binding site" evidence="1">
    <location>
        <position position="69"/>
    </location>
    <ligand>
        <name>Mg(2+)</name>
        <dbReference type="ChEBI" id="CHEBI:18420"/>
    </ligand>
</feature>
<feature type="binding site" evidence="2">
    <location>
        <position position="138"/>
    </location>
    <ligand>
        <name>GTP</name>
        <dbReference type="ChEBI" id="CHEBI:37565"/>
    </ligand>
</feature>
<feature type="binding site" evidence="2">
    <location>
        <position position="142"/>
    </location>
    <ligand>
        <name>GTP</name>
        <dbReference type="ChEBI" id="CHEBI:37565"/>
    </ligand>
</feature>
<feature type="binding site" evidence="2">
    <location>
        <position position="143"/>
    </location>
    <ligand>
        <name>GTP</name>
        <dbReference type="ChEBI" id="CHEBI:37565"/>
    </ligand>
</feature>
<feature type="binding site" evidence="2">
    <location>
        <position position="144"/>
    </location>
    <ligand>
        <name>GTP</name>
        <dbReference type="ChEBI" id="CHEBI:37565"/>
    </ligand>
</feature>
<feature type="binding site" evidence="2">
    <location>
        <position position="204"/>
    </location>
    <ligand>
        <name>GTP</name>
        <dbReference type="ChEBI" id="CHEBI:37565"/>
    </ligand>
</feature>
<feature type="binding site" evidence="2">
    <location>
        <position position="226"/>
    </location>
    <ligand>
        <name>GTP</name>
        <dbReference type="ChEBI" id="CHEBI:37565"/>
    </ligand>
</feature>
<accession>O59837</accession>
<sequence>MRELVHIQGGQCGNQIGAKFWEVISDEHGVDPTGSYHGDSDLQLERINVYYNEATGGRYVPRAILMDLEPGTMDSVRAGPYGQLFRPDNFVFGQTGAGNNWAKGHYTEGAELIDSVLDVVRKEAESCDCLQGFQITHSLGGGTGSGMGTLLISKIREEYPDRIMCTYSVCPSPKVSDTVVEPYNATLSVHQLVENADEVMCLDNEALYDICFRTLKLTNPTYGDLNHLVCAAMSGITTCLRFPGQLNSVLKLFAVNLIPFPRLHFFMIGFAPLTSRGSQQYRALTVPELTQQQFDAKNMMCAADPRHGRYLTAACMFRGRMSTKEVDEQMLNVQNKNSSYFVEWIPNNIKASVCDIPPQGLKMSTTFIGNSTAIQEMFKRVSEQFTAMFRRKAFLHWYTGEGMDEMEFTEAESNMNDLVSEYQQYQDGTAEEEGEFDEDEEWMR</sequence>
<comment type="function">
    <text>Tubulin is the major constituent of microtubules, a cylinder consisting of laterally associated linear protofilaments composed of alpha- and beta-tubulin heterodimers. Microtubules grow by the addition of GTP-tubulin dimers to the microtubule end, where a stabilizing cap forms. Below the cap, tubulin dimers are in GDP-bound state, owing to GTPase activity of alpha-tubulin.</text>
</comment>
<comment type="cofactor">
    <cofactor evidence="1">
        <name>Mg(2+)</name>
        <dbReference type="ChEBI" id="CHEBI:18420"/>
    </cofactor>
</comment>
<comment type="subunit">
    <text>Dimer of alpha and beta chains. A typical microtubule is a hollow water-filled tube with an outer diameter of 25 nm and an inner diameter of 15 nM. Alpha-beta heterodimers associate head-to-tail to form protofilaments running lengthwise along the microtubule wall with the beta-tubulin subunit facing the microtubule plus end conferring a structural polarity. Microtubules usually have 13 protofilaments but different protofilament numbers can be found in some organisms and specialized cells.</text>
</comment>
<comment type="subcellular location">
    <subcellularLocation>
        <location>Cytoplasm</location>
        <location>Cytoskeleton</location>
    </subcellularLocation>
</comment>
<comment type="similarity">
    <text evidence="3">Belongs to the tubulin family.</text>
</comment>
<protein>
    <recommendedName>
        <fullName>Tubulin beta chain</fullName>
    </recommendedName>
    <alternativeName>
        <fullName>Beta-tubulin</fullName>
    </alternativeName>
</protein>
<keyword id="KW-0963">Cytoplasm</keyword>
<keyword id="KW-0206">Cytoskeleton</keyword>
<keyword id="KW-0342">GTP-binding</keyword>
<keyword id="KW-0460">Magnesium</keyword>
<keyword id="KW-0479">Metal-binding</keyword>
<keyword id="KW-0493">Microtubule</keyword>
<keyword id="KW-0547">Nucleotide-binding</keyword>
<evidence type="ECO:0000250" key="1">
    <source>
        <dbReference type="UniProtKB" id="P68363"/>
    </source>
</evidence>
<evidence type="ECO:0000250" key="2">
    <source>
        <dbReference type="UniProtKB" id="Q13509"/>
    </source>
</evidence>
<evidence type="ECO:0000305" key="3"/>
<name>TBB_PHYCI</name>